<dbReference type="EMBL" id="AL590445">
    <property type="protein sequence ID" value="CAD26648.1"/>
    <property type="molecule type" value="Genomic_DNA"/>
</dbReference>
<dbReference type="RefSeq" id="NP_597471.1">
    <property type="nucleotide sequence ID" value="NM_001041337.1"/>
</dbReference>
<dbReference type="SMR" id="Q8SRV0"/>
<dbReference type="FunCoup" id="Q8SRV0">
    <property type="interactions" value="254"/>
</dbReference>
<dbReference type="STRING" id="284813.Q8SRV0"/>
<dbReference type="GeneID" id="859137"/>
<dbReference type="KEGG" id="ecu:ECU05_1280"/>
<dbReference type="VEuPathDB" id="MicrosporidiaDB:ECU05_1280"/>
<dbReference type="HOGENOM" id="CLU_009535_3_4_1"/>
<dbReference type="InParanoid" id="Q8SRV0"/>
<dbReference type="OMA" id="ESCMFNA"/>
<dbReference type="OrthoDB" id="30417at2759"/>
<dbReference type="Proteomes" id="UP000000819">
    <property type="component" value="Chromosome V"/>
</dbReference>
<dbReference type="GO" id="GO:0000781">
    <property type="term" value="C:chromosome, telomeric region"/>
    <property type="evidence" value="ECO:0007669"/>
    <property type="project" value="UniProtKB-SubCell"/>
</dbReference>
<dbReference type="GO" id="GO:0030870">
    <property type="term" value="C:Mre11 complex"/>
    <property type="evidence" value="ECO:0007669"/>
    <property type="project" value="InterPro"/>
</dbReference>
<dbReference type="GO" id="GO:0035861">
    <property type="term" value="C:site of double-strand break"/>
    <property type="evidence" value="ECO:0007669"/>
    <property type="project" value="TreeGrafter"/>
</dbReference>
<dbReference type="GO" id="GO:0008296">
    <property type="term" value="F:3'-5'-DNA exonuclease activity"/>
    <property type="evidence" value="ECO:0007669"/>
    <property type="project" value="InterPro"/>
</dbReference>
<dbReference type="GO" id="GO:0030145">
    <property type="term" value="F:manganese ion binding"/>
    <property type="evidence" value="ECO:0007669"/>
    <property type="project" value="InterPro"/>
</dbReference>
<dbReference type="GO" id="GO:0000014">
    <property type="term" value="F:single-stranded DNA endodeoxyribonuclease activity"/>
    <property type="evidence" value="ECO:0007669"/>
    <property type="project" value="TreeGrafter"/>
</dbReference>
<dbReference type="GO" id="GO:0000724">
    <property type="term" value="P:double-strand break repair via homologous recombination"/>
    <property type="evidence" value="ECO:0007669"/>
    <property type="project" value="TreeGrafter"/>
</dbReference>
<dbReference type="GO" id="GO:0006303">
    <property type="term" value="P:double-strand break repair via nonhomologous end joining"/>
    <property type="evidence" value="ECO:0007669"/>
    <property type="project" value="TreeGrafter"/>
</dbReference>
<dbReference type="GO" id="GO:0042138">
    <property type="term" value="P:meiotic DNA double-strand break formation"/>
    <property type="evidence" value="ECO:0007669"/>
    <property type="project" value="TreeGrafter"/>
</dbReference>
<dbReference type="GO" id="GO:0097552">
    <property type="term" value="P:mitochondrial double-strand break repair via homologous recombination"/>
    <property type="evidence" value="ECO:0007669"/>
    <property type="project" value="TreeGrafter"/>
</dbReference>
<dbReference type="GO" id="GO:0007095">
    <property type="term" value="P:mitotic G2 DNA damage checkpoint signaling"/>
    <property type="evidence" value="ECO:0007669"/>
    <property type="project" value="TreeGrafter"/>
</dbReference>
<dbReference type="GO" id="GO:0000723">
    <property type="term" value="P:telomere maintenance"/>
    <property type="evidence" value="ECO:0007669"/>
    <property type="project" value="TreeGrafter"/>
</dbReference>
<dbReference type="CDD" id="cd00840">
    <property type="entry name" value="MPP_Mre11_N"/>
    <property type="match status" value="1"/>
</dbReference>
<dbReference type="Gene3D" id="3.60.21.10">
    <property type="match status" value="1"/>
</dbReference>
<dbReference type="InterPro" id="IPR004843">
    <property type="entry name" value="Calcineurin-like_PHP_ApaH"/>
</dbReference>
<dbReference type="InterPro" id="IPR029052">
    <property type="entry name" value="Metallo-depent_PP-like"/>
</dbReference>
<dbReference type="InterPro" id="IPR003701">
    <property type="entry name" value="Mre11"/>
</dbReference>
<dbReference type="InterPro" id="IPR007281">
    <property type="entry name" value="Mre11_DNA-bd"/>
</dbReference>
<dbReference type="InterPro" id="IPR041796">
    <property type="entry name" value="Mre11_N"/>
</dbReference>
<dbReference type="PANTHER" id="PTHR10139">
    <property type="entry name" value="DOUBLE-STRAND BREAK REPAIR PROTEIN MRE11"/>
    <property type="match status" value="1"/>
</dbReference>
<dbReference type="PANTHER" id="PTHR10139:SF1">
    <property type="entry name" value="DOUBLE-STRAND BREAK REPAIR PROTEIN MRE11"/>
    <property type="match status" value="1"/>
</dbReference>
<dbReference type="Pfam" id="PF00149">
    <property type="entry name" value="Metallophos"/>
    <property type="match status" value="1"/>
</dbReference>
<dbReference type="Pfam" id="PF04152">
    <property type="entry name" value="Mre11_DNA_bind"/>
    <property type="match status" value="1"/>
</dbReference>
<dbReference type="PIRSF" id="PIRSF000882">
    <property type="entry name" value="DSB_repair_MRE11"/>
    <property type="match status" value="1"/>
</dbReference>
<dbReference type="SMART" id="SM01347">
    <property type="entry name" value="Mre11_DNA_bind"/>
    <property type="match status" value="1"/>
</dbReference>
<dbReference type="SUPFAM" id="SSF56300">
    <property type="entry name" value="Metallo-dependent phosphatases"/>
    <property type="match status" value="1"/>
</dbReference>
<gene>
    <name type="primary">MRE11</name>
    <name type="ordered locus">ECU05_1280</name>
</gene>
<comment type="function">
    <text evidence="2">Core component of the MRN complex, which plays a central role in double-strand break (DSB) repair, DNA recombination, maintenance of telomere integrity and meiosis. The MRN complex is involved in the repair of DNA double-strand breaks (DSBs) via homologous recombination (HR), an error-free mechanism which primarily occurs during S and G2 phases. The complex (1) mediates the end resection of damaged DNA, which generates proper single-stranded DNA, a key initial steps in HR, and is (2) required for the recruitment of other repair factors and efficient activation of ATM and ATR upon DNA damage. Within the MRN complex, MRE11 possesses both single-strand endonuclease activity and double-strand-specific 3'-5' exonuclease activity. MRE11 first endonucleolytically cleaves the 5' strand at DNA DSB ends to prevent non-homologous end joining (NHEJ) and licence HR. It then generates a single-stranded DNA gap via 3' to 5' exonucleolytic degradation, which is required for single-strand invasion and recombination. The MRN complex is also required for the processing of R-loops.</text>
</comment>
<comment type="cofactor">
    <cofactor evidence="1">
        <name>Mn(2+)</name>
        <dbReference type="ChEBI" id="CHEBI:29035"/>
    </cofactor>
</comment>
<comment type="subunit">
    <text evidence="1">Component of the MRN complex composed of two heterodimers RAD50 and MRE11 associated with a single NBS1.</text>
</comment>
<comment type="subcellular location">
    <subcellularLocation>
        <location evidence="2">Nucleus</location>
    </subcellularLocation>
    <subcellularLocation>
        <location evidence="3">Chromosome</location>
        <location evidence="3">Telomere</location>
    </subcellularLocation>
    <subcellularLocation>
        <location evidence="3">Chromosome</location>
    </subcellularLocation>
    <text evidence="3">Localizes to discrete nuclear foci after treatment with genotoxic agents.</text>
</comment>
<comment type="similarity">
    <text evidence="6">Belongs to the MRE11/RAD32 family.</text>
</comment>
<accession>Q8SRV0</accession>
<evidence type="ECO:0000250" key="1">
    <source>
        <dbReference type="UniProtKB" id="G0RYR3"/>
    </source>
</evidence>
<evidence type="ECO:0000250" key="2">
    <source>
        <dbReference type="UniProtKB" id="P32829"/>
    </source>
</evidence>
<evidence type="ECO:0000250" key="3">
    <source>
        <dbReference type="UniProtKB" id="P49959"/>
    </source>
</evidence>
<evidence type="ECO:0000255" key="4">
    <source>
        <dbReference type="PIRSR" id="PIRSR000882-1"/>
    </source>
</evidence>
<evidence type="ECO:0000256" key="5">
    <source>
        <dbReference type="SAM" id="MobiDB-lite"/>
    </source>
</evidence>
<evidence type="ECO:0000305" key="6"/>
<feature type="chain" id="PRO_0000381757" description="Double-strand break repair protein MRE11">
    <location>
        <begin position="1"/>
        <end position="567"/>
    </location>
</feature>
<feature type="region of interest" description="Disordered" evidence="5">
    <location>
        <begin position="513"/>
        <end position="533"/>
    </location>
</feature>
<feature type="active site" description="Proton donor" evidence="4">
    <location>
        <position position="105"/>
    </location>
</feature>
<feature type="binding site" evidence="1">
    <location>
        <position position="8"/>
    </location>
    <ligand>
        <name>Mn(2+)</name>
        <dbReference type="ChEBI" id="CHEBI:29035"/>
        <label>1</label>
    </ligand>
</feature>
<feature type="binding site" evidence="1">
    <location>
        <position position="10"/>
    </location>
    <ligand>
        <name>Mn(2+)</name>
        <dbReference type="ChEBI" id="CHEBI:29035"/>
        <label>1</label>
    </ligand>
</feature>
<feature type="binding site" evidence="1">
    <location>
        <position position="48"/>
    </location>
    <ligand>
        <name>Mn(2+)</name>
        <dbReference type="ChEBI" id="CHEBI:29035"/>
        <label>1</label>
    </ligand>
</feature>
<feature type="binding site" evidence="1">
    <location>
        <position position="48"/>
    </location>
    <ligand>
        <name>Mn(2+)</name>
        <dbReference type="ChEBI" id="CHEBI:29035"/>
        <label>2</label>
    </ligand>
</feature>
<feature type="binding site" evidence="1">
    <location>
        <position position="104"/>
    </location>
    <ligand>
        <name>Mn(2+)</name>
        <dbReference type="ChEBI" id="CHEBI:29035"/>
        <label>2</label>
    </ligand>
</feature>
<feature type="binding site" evidence="1">
    <location>
        <position position="191"/>
    </location>
    <ligand>
        <name>Mn(2+)</name>
        <dbReference type="ChEBI" id="CHEBI:29035"/>
        <label>2</label>
    </ligand>
</feature>
<feature type="binding site" evidence="1">
    <location>
        <position position="218"/>
    </location>
    <ligand>
        <name>Mn(2+)</name>
        <dbReference type="ChEBI" id="CHEBI:29035"/>
        <label>2</label>
    </ligand>
</feature>
<feature type="binding site" evidence="1">
    <location>
        <position position="220"/>
    </location>
    <ligand>
        <name>Mn(2+)</name>
        <dbReference type="ChEBI" id="CHEBI:29035"/>
        <label>1</label>
    </ligand>
</feature>
<reference key="1">
    <citation type="journal article" date="2001" name="Nature">
        <title>Genome sequence and gene compaction of the eukaryote parasite Encephalitozoon cuniculi.</title>
        <authorList>
            <person name="Katinka M.D."/>
            <person name="Duprat S."/>
            <person name="Cornillot E."/>
            <person name="Metenier G."/>
            <person name="Thomarat F."/>
            <person name="Prensier G."/>
            <person name="Barbe V."/>
            <person name="Peyretaillade E."/>
            <person name="Brottier P."/>
            <person name="Wincker P."/>
            <person name="Delbac F."/>
            <person name="El Alaoui H."/>
            <person name="Peyret P."/>
            <person name="Saurin W."/>
            <person name="Gouy M."/>
            <person name="Weissenbach J."/>
            <person name="Vivares C.P."/>
        </authorList>
    </citation>
    <scope>NUCLEOTIDE SEQUENCE [LARGE SCALE GENOMIC DNA]</scope>
    <source>
        <strain>GB-M1</strain>
    </source>
</reference>
<sequence length="567" mass="65003">MKILITSDNHLGYRESDPVLLDDSYDTFEEILGIAQRERVDLVLQGGDLFHENRPSRSCLNRTIGLFRRYCIGNERSGLRSNLALNFHDQNIGISIPVVSIHGNHDDPSGISMVSPIDILQSAGLVNYIGKYNLIDRIDVYPLLLEKEYRVAIYGLGHIKDRRLYRMFCEGRIVFHRPEDYDSWYNVLILHQNRIPREKEHFSSDLVEGFFDLIVYGHEHESMVVKGDCLILQPGSTVRTSLCEGERHDKYAYILRIGEECTLEHVKLRSVRPLLLDTLRIEERDNVEEKVENKIRGMIDLGRKKESLFNKEITAIDVDTKRFKCRGDSNEACGAGPVCKGYQLEEKTRIPLVKLKIELCGDEVLDKHRFSAQFKGLVANPSDMLTISRKTRRREEVETQPMAERVEISQILRKILGNVEFGVLSRLGFSESLDEFVKGDSNAFMGMVRKNIEKVVNAVDHSSIVDEDVIKAMKRASREEDRGYEEDHFEPRAALGVLDEMDPGLANKNLRNEYSSRLGGNSEENESKAKKNFNVEDLLGKEYLSKKLRKDKEDSSTDVSFTFSKYL</sequence>
<keyword id="KW-0158">Chromosome</keyword>
<keyword id="KW-0227">DNA damage</keyword>
<keyword id="KW-0234">DNA repair</keyword>
<keyword id="KW-0255">Endonuclease</keyword>
<keyword id="KW-0269">Exonuclease</keyword>
<keyword id="KW-0378">Hydrolase</keyword>
<keyword id="KW-0464">Manganese</keyword>
<keyword id="KW-0469">Meiosis</keyword>
<keyword id="KW-0479">Metal-binding</keyword>
<keyword id="KW-0540">Nuclease</keyword>
<keyword id="KW-0539">Nucleus</keyword>
<keyword id="KW-1185">Reference proteome</keyword>
<keyword id="KW-0779">Telomere</keyword>
<organism>
    <name type="scientific">Encephalitozoon cuniculi (strain GB-M1)</name>
    <name type="common">Microsporidian parasite</name>
    <dbReference type="NCBI Taxonomy" id="284813"/>
    <lineage>
        <taxon>Eukaryota</taxon>
        <taxon>Fungi</taxon>
        <taxon>Fungi incertae sedis</taxon>
        <taxon>Microsporidia</taxon>
        <taxon>Unikaryonidae</taxon>
        <taxon>Encephalitozoon</taxon>
    </lineage>
</organism>
<name>MRE11_ENCCU</name>
<protein>
    <recommendedName>
        <fullName>Double-strand break repair protein MRE11</fullName>
    </recommendedName>
</protein>
<proteinExistence type="inferred from homology"/>